<feature type="chain" id="PRO_0000308222" description="Testis development-related protein">
    <location>
        <begin position="1"/>
        <end position="209"/>
    </location>
</feature>
<feature type="region of interest" description="Disordered" evidence="2">
    <location>
        <begin position="126"/>
        <end position="183"/>
    </location>
</feature>
<feature type="compositionally biased region" description="Polar residues" evidence="2">
    <location>
        <begin position="167"/>
        <end position="183"/>
    </location>
</feature>
<gene>
    <name type="primary">tdrp</name>
</gene>
<proteinExistence type="evidence at transcript level"/>
<name>TDRP_XENLA</name>
<sequence length="209" mass="23565">MWKLNKSKVLIEDSPDEEIQAQQDAQIKDQLLQEEVQSPVSQLATKELQSLKTSFSSMKGQVTVQGASFRGWKEVTSIFNKDDEQQLLKGAKSKVISAKPKEDLKTEKKAGFWDSLAIKQNIQPKKADEIEGWEPPHITVEESPTFPDDGLDDPNSWPGWEDETKGSTKYTNLTSSGNSSRWSIKSAGKLVSIRRRSKGNLTENWKELE</sequence>
<reference key="1">
    <citation type="submission" date="2005-01" db="EMBL/GenBank/DDBJ databases">
        <authorList>
            <consortium name="NIH - Xenopus Gene Collection (XGC) project"/>
        </authorList>
    </citation>
    <scope>NUCLEOTIDE SEQUENCE [LARGE SCALE MRNA]</scope>
    <source>
        <tissue>Embryo</tissue>
    </source>
</reference>
<accession>Q5I019</accession>
<keyword id="KW-0963">Cytoplasm</keyword>
<keyword id="KW-0539">Nucleus</keyword>
<keyword id="KW-1185">Reference proteome</keyword>
<comment type="subcellular location">
    <subcellularLocation>
        <location evidence="1">Nucleus</location>
    </subcellularLocation>
    <subcellularLocation>
        <location evidence="1">Cytoplasm</location>
    </subcellularLocation>
</comment>
<comment type="similarity">
    <text evidence="3">Belongs to the TDRP family.</text>
</comment>
<dbReference type="EMBL" id="BC088804">
    <property type="protein sequence ID" value="AAH88804.1"/>
    <property type="molecule type" value="mRNA"/>
</dbReference>
<dbReference type="RefSeq" id="NP_001088923.1">
    <property type="nucleotide sequence ID" value="NM_001095454.1"/>
</dbReference>
<dbReference type="RefSeq" id="XP_018117556.1">
    <property type="nucleotide sequence ID" value="XM_018262067.1"/>
</dbReference>
<dbReference type="DNASU" id="496295"/>
<dbReference type="GeneID" id="496295"/>
<dbReference type="KEGG" id="xla:496295"/>
<dbReference type="AGR" id="Xenbase:XB-GENE-952645"/>
<dbReference type="CTD" id="496295"/>
<dbReference type="Xenbase" id="XB-GENE-952645">
    <property type="gene designation" value="tdrp.L"/>
</dbReference>
<dbReference type="OMA" id="TELWICW"/>
<dbReference type="OrthoDB" id="9634112at2759"/>
<dbReference type="Proteomes" id="UP000186698">
    <property type="component" value="Chromosome 5L"/>
</dbReference>
<dbReference type="Bgee" id="496295">
    <property type="expression patterns" value="Expressed in egg cell and 19 other cell types or tissues"/>
</dbReference>
<dbReference type="GO" id="GO:0005737">
    <property type="term" value="C:cytoplasm"/>
    <property type="evidence" value="ECO:0000250"/>
    <property type="project" value="UniProtKB"/>
</dbReference>
<dbReference type="GO" id="GO:0005829">
    <property type="term" value="C:cytosol"/>
    <property type="evidence" value="ECO:0000318"/>
    <property type="project" value="GO_Central"/>
</dbReference>
<dbReference type="GO" id="GO:0005634">
    <property type="term" value="C:nucleus"/>
    <property type="evidence" value="ECO:0000250"/>
    <property type="project" value="UniProtKB"/>
</dbReference>
<dbReference type="GO" id="GO:0007283">
    <property type="term" value="P:spermatogenesis"/>
    <property type="evidence" value="ECO:0000318"/>
    <property type="project" value="GO_Central"/>
</dbReference>
<dbReference type="InterPro" id="IPR031399">
    <property type="entry name" value="TDRP"/>
</dbReference>
<dbReference type="PANTHER" id="PTHR35663:SF1">
    <property type="entry name" value="TESTIS DEVELOPMENT-RELATED PROTEIN"/>
    <property type="match status" value="1"/>
</dbReference>
<dbReference type="PANTHER" id="PTHR35663">
    <property type="entry name" value="TESTIS DEVELOPMENT-RELATED PROTEIN-RELATED"/>
    <property type="match status" value="1"/>
</dbReference>
<dbReference type="Pfam" id="PF15683">
    <property type="entry name" value="TDRP"/>
    <property type="match status" value="1"/>
</dbReference>
<protein>
    <recommendedName>
        <fullName>Testis development-related protein</fullName>
    </recommendedName>
</protein>
<evidence type="ECO:0000250" key="1"/>
<evidence type="ECO:0000256" key="2">
    <source>
        <dbReference type="SAM" id="MobiDB-lite"/>
    </source>
</evidence>
<evidence type="ECO:0000305" key="3"/>
<organism>
    <name type="scientific">Xenopus laevis</name>
    <name type="common">African clawed frog</name>
    <dbReference type="NCBI Taxonomy" id="8355"/>
    <lineage>
        <taxon>Eukaryota</taxon>
        <taxon>Metazoa</taxon>
        <taxon>Chordata</taxon>
        <taxon>Craniata</taxon>
        <taxon>Vertebrata</taxon>
        <taxon>Euteleostomi</taxon>
        <taxon>Amphibia</taxon>
        <taxon>Batrachia</taxon>
        <taxon>Anura</taxon>
        <taxon>Pipoidea</taxon>
        <taxon>Pipidae</taxon>
        <taxon>Xenopodinae</taxon>
        <taxon>Xenopus</taxon>
        <taxon>Xenopus</taxon>
    </lineage>
</organism>